<comment type="function">
    <text evidence="1">Part of the high-affinity ATP-driven potassium transport (or Kdp) system, which catalyzes the hydrolysis of ATP coupled with the electrogenic transport of potassium into the cytoplasm. This subunit binds the periplasmic potassium ions and delivers the ions to the membrane domain of KdpB through an intramembrane tunnel.</text>
</comment>
<comment type="subunit">
    <text evidence="1">The system is composed of three essential subunits: KdpA, KdpB and KdpC.</text>
</comment>
<comment type="subcellular location">
    <subcellularLocation>
        <location evidence="1">Cell inner membrane</location>
        <topology evidence="1">Multi-pass membrane protein</topology>
    </subcellularLocation>
</comment>
<comment type="similarity">
    <text evidence="1">Belongs to the KdpA family.</text>
</comment>
<name>KDPA_SALPK</name>
<evidence type="ECO:0000255" key="1">
    <source>
        <dbReference type="HAMAP-Rule" id="MF_00275"/>
    </source>
</evidence>
<sequence>MAAQGFLLIASFLLILLVLAKPLGSGLARLIAAVPLPGVAGVERILWRTLGITDHEMNWRQYLLALLTLNLLGLGILFCLLFWQEWLPLNPQRLPGLSWDLALNTAVSFVTNTNWQAYSGESTLSYFSQMAGLTVQNFLSAATGIAVVFALIRAFTRQNVHTLGNAWQDLVRITLWILFPVALIIALFFIQQGVPQNLSAYQPITTLEGAKQLLPMGPVASQEAIKMLGTNGGGFFNANSSHPFENPTALTNLAQMLAIFLIPAALCFAFGEAAGDRRQGRALLWAMSFIFVVCVAVVMWAEVQGNPHLLAAGADSSVNMEGKETRFGVLASSLFAVVTTAASCGAVNAMHDSFTALGGMVPMWLMQIGEVVFGGVGSGLYGMLLFVLLAVFIAGLMIGRTPEYLGKKIDVREMKMTALAILVTPMLVLLGSALAMMTDAGRSAMLNPGPHGFSEVLYAVSSAANNNGSAFAGLSANSPFWNCLLAFCMFVGRFGVIIPVMAIAGSLVSKKVQPASQGTLATHGALFIGLLIGTVLLVGALTFIPALALGPVAEHFSLP</sequence>
<accession>B5BCA3</accession>
<gene>
    <name evidence="1" type="primary">kdpA</name>
    <name type="ordered locus">SSPA1896</name>
</gene>
<feature type="chain" id="PRO_1000114704" description="Potassium-transporting ATPase potassium-binding subunit">
    <location>
        <begin position="1"/>
        <end position="559"/>
    </location>
</feature>
<feature type="transmembrane region" description="Helical" evidence="1">
    <location>
        <begin position="5"/>
        <end position="25"/>
    </location>
</feature>
<feature type="transmembrane region" description="Helical" evidence="1">
    <location>
        <begin position="27"/>
        <end position="47"/>
    </location>
</feature>
<feature type="transmembrane region" description="Helical" evidence="1">
    <location>
        <begin position="63"/>
        <end position="83"/>
    </location>
</feature>
<feature type="transmembrane region" description="Helical" evidence="1">
    <location>
        <begin position="132"/>
        <end position="152"/>
    </location>
</feature>
<feature type="transmembrane region" description="Helical" evidence="1">
    <location>
        <begin position="170"/>
        <end position="190"/>
    </location>
</feature>
<feature type="transmembrane region" description="Helical" evidence="1">
    <location>
        <begin position="253"/>
        <end position="273"/>
    </location>
</feature>
<feature type="transmembrane region" description="Helical" evidence="1">
    <location>
        <begin position="283"/>
        <end position="303"/>
    </location>
</feature>
<feature type="transmembrane region" description="Helical" evidence="1">
    <location>
        <begin position="327"/>
        <end position="347"/>
    </location>
</feature>
<feature type="transmembrane region" description="Helical" evidence="1">
    <location>
        <begin position="356"/>
        <end position="376"/>
    </location>
</feature>
<feature type="transmembrane region" description="Helical" evidence="1">
    <location>
        <begin position="379"/>
        <end position="399"/>
    </location>
</feature>
<feature type="transmembrane region" description="Helical" evidence="1">
    <location>
        <begin position="416"/>
        <end position="436"/>
    </location>
</feature>
<feature type="transmembrane region" description="Helical" evidence="1">
    <location>
        <begin position="484"/>
        <end position="504"/>
    </location>
</feature>
<feature type="transmembrane region" description="Helical" evidence="1">
    <location>
        <begin position="524"/>
        <end position="544"/>
    </location>
</feature>
<dbReference type="EMBL" id="FM200053">
    <property type="protein sequence ID" value="CAR60095.1"/>
    <property type="molecule type" value="Genomic_DNA"/>
</dbReference>
<dbReference type="RefSeq" id="WP_000730078.1">
    <property type="nucleotide sequence ID" value="NC_011147.1"/>
</dbReference>
<dbReference type="SMR" id="B5BCA3"/>
<dbReference type="KEGG" id="sek:SSPA1896"/>
<dbReference type="HOGENOM" id="CLU_018614_3_0_6"/>
<dbReference type="Proteomes" id="UP000001869">
    <property type="component" value="Chromosome"/>
</dbReference>
<dbReference type="GO" id="GO:0005886">
    <property type="term" value="C:plasma membrane"/>
    <property type="evidence" value="ECO:0007669"/>
    <property type="project" value="UniProtKB-SubCell"/>
</dbReference>
<dbReference type="GO" id="GO:0008556">
    <property type="term" value="F:P-type potassium transmembrane transporter activity"/>
    <property type="evidence" value="ECO:0007669"/>
    <property type="project" value="InterPro"/>
</dbReference>
<dbReference type="GO" id="GO:0030955">
    <property type="term" value="F:potassium ion binding"/>
    <property type="evidence" value="ECO:0007669"/>
    <property type="project" value="UniProtKB-UniRule"/>
</dbReference>
<dbReference type="HAMAP" id="MF_00275">
    <property type="entry name" value="KdpA"/>
    <property type="match status" value="1"/>
</dbReference>
<dbReference type="InterPro" id="IPR004623">
    <property type="entry name" value="KdpA"/>
</dbReference>
<dbReference type="NCBIfam" id="TIGR00680">
    <property type="entry name" value="kdpA"/>
    <property type="match status" value="1"/>
</dbReference>
<dbReference type="PANTHER" id="PTHR30607">
    <property type="entry name" value="POTASSIUM-TRANSPORTING ATPASE A CHAIN"/>
    <property type="match status" value="1"/>
</dbReference>
<dbReference type="PANTHER" id="PTHR30607:SF2">
    <property type="entry name" value="POTASSIUM-TRANSPORTING ATPASE POTASSIUM-BINDING SUBUNIT"/>
    <property type="match status" value="1"/>
</dbReference>
<dbReference type="Pfam" id="PF03814">
    <property type="entry name" value="KdpA"/>
    <property type="match status" value="1"/>
</dbReference>
<dbReference type="PIRSF" id="PIRSF001294">
    <property type="entry name" value="K_ATPaseA"/>
    <property type="match status" value="1"/>
</dbReference>
<proteinExistence type="inferred from homology"/>
<reference key="1">
    <citation type="journal article" date="2009" name="BMC Genomics">
        <title>Pseudogene accumulation in the evolutionary histories of Salmonella enterica serovars Paratyphi A and Typhi.</title>
        <authorList>
            <person name="Holt K.E."/>
            <person name="Thomson N.R."/>
            <person name="Wain J."/>
            <person name="Langridge G.C."/>
            <person name="Hasan R."/>
            <person name="Bhutta Z.A."/>
            <person name="Quail M.A."/>
            <person name="Norbertczak H."/>
            <person name="Walker D."/>
            <person name="Simmonds M."/>
            <person name="White B."/>
            <person name="Bason N."/>
            <person name="Mungall K."/>
            <person name="Dougan G."/>
            <person name="Parkhill J."/>
        </authorList>
    </citation>
    <scope>NUCLEOTIDE SEQUENCE [LARGE SCALE GENOMIC DNA]</scope>
    <source>
        <strain>AKU_12601</strain>
    </source>
</reference>
<protein>
    <recommendedName>
        <fullName evidence="1">Potassium-transporting ATPase potassium-binding subunit</fullName>
    </recommendedName>
    <alternativeName>
        <fullName evidence="1">ATP phosphohydrolase [potassium-transporting] A chain</fullName>
    </alternativeName>
    <alternativeName>
        <fullName evidence="1">Potassium-binding and translocating subunit A</fullName>
    </alternativeName>
    <alternativeName>
        <fullName evidence="1">Potassium-translocating ATPase A chain</fullName>
    </alternativeName>
</protein>
<keyword id="KW-0997">Cell inner membrane</keyword>
<keyword id="KW-1003">Cell membrane</keyword>
<keyword id="KW-0406">Ion transport</keyword>
<keyword id="KW-0472">Membrane</keyword>
<keyword id="KW-0630">Potassium</keyword>
<keyword id="KW-0633">Potassium transport</keyword>
<keyword id="KW-0812">Transmembrane</keyword>
<keyword id="KW-1133">Transmembrane helix</keyword>
<keyword id="KW-0813">Transport</keyword>
<organism>
    <name type="scientific">Salmonella paratyphi A (strain AKU_12601)</name>
    <dbReference type="NCBI Taxonomy" id="554290"/>
    <lineage>
        <taxon>Bacteria</taxon>
        <taxon>Pseudomonadati</taxon>
        <taxon>Pseudomonadota</taxon>
        <taxon>Gammaproteobacteria</taxon>
        <taxon>Enterobacterales</taxon>
        <taxon>Enterobacteriaceae</taxon>
        <taxon>Salmonella</taxon>
    </lineage>
</organism>